<organism>
    <name type="scientific">Bacillus subtilis (strain 168)</name>
    <dbReference type="NCBI Taxonomy" id="224308"/>
    <lineage>
        <taxon>Bacteria</taxon>
        <taxon>Bacillati</taxon>
        <taxon>Bacillota</taxon>
        <taxon>Bacilli</taxon>
        <taxon>Bacillales</taxon>
        <taxon>Bacillaceae</taxon>
        <taxon>Bacillus</taxon>
    </lineage>
</organism>
<protein>
    <recommendedName>
        <fullName>Uncharacterized protein YqzN</fullName>
    </recommendedName>
</protein>
<dbReference type="EMBL" id="AL009126">
    <property type="protein sequence ID" value="CAX52664.1"/>
    <property type="molecule type" value="Genomic_DNA"/>
</dbReference>
<dbReference type="RefSeq" id="WP_010886574.1">
    <property type="nucleotide sequence ID" value="NZ_OZ025638.1"/>
</dbReference>
<dbReference type="RefSeq" id="YP_003097763.1">
    <property type="nucleotide sequence ID" value="NC_000964.3"/>
</dbReference>
<dbReference type="SMR" id="C0H454"/>
<dbReference type="STRING" id="224308.BSU26089"/>
<dbReference type="PaxDb" id="224308-BSU26089"/>
<dbReference type="EnsemblBacteria" id="CAX52664">
    <property type="protein sequence ID" value="CAX52664"/>
    <property type="gene ID" value="BSU_26089"/>
</dbReference>
<dbReference type="GeneID" id="8303132"/>
<dbReference type="KEGG" id="bsu:BSU26089"/>
<dbReference type="PATRIC" id="fig|224308.179.peg.2834"/>
<dbReference type="eggNOG" id="ENOG502ZGS5">
    <property type="taxonomic scope" value="Bacteria"/>
</dbReference>
<dbReference type="InParanoid" id="C0H454"/>
<dbReference type="OrthoDB" id="2666545at2"/>
<dbReference type="BioCyc" id="BSUB:BSU26089-MONOMER"/>
<dbReference type="Proteomes" id="UP000001570">
    <property type="component" value="Chromosome"/>
</dbReference>
<name>YQZN_BACSU</name>
<proteinExistence type="predicted"/>
<reference key="1">
    <citation type="journal article" date="1997" name="Nature">
        <title>The complete genome sequence of the Gram-positive bacterium Bacillus subtilis.</title>
        <authorList>
            <person name="Kunst F."/>
            <person name="Ogasawara N."/>
            <person name="Moszer I."/>
            <person name="Albertini A.M."/>
            <person name="Alloni G."/>
            <person name="Azevedo V."/>
            <person name="Bertero M.G."/>
            <person name="Bessieres P."/>
            <person name="Bolotin A."/>
            <person name="Borchert S."/>
            <person name="Borriss R."/>
            <person name="Boursier L."/>
            <person name="Brans A."/>
            <person name="Braun M."/>
            <person name="Brignell S.C."/>
            <person name="Bron S."/>
            <person name="Brouillet S."/>
            <person name="Bruschi C.V."/>
            <person name="Caldwell B."/>
            <person name="Capuano V."/>
            <person name="Carter N.M."/>
            <person name="Choi S.-K."/>
            <person name="Codani J.-J."/>
            <person name="Connerton I.F."/>
            <person name="Cummings N.J."/>
            <person name="Daniel R.A."/>
            <person name="Denizot F."/>
            <person name="Devine K.M."/>
            <person name="Duesterhoeft A."/>
            <person name="Ehrlich S.D."/>
            <person name="Emmerson P.T."/>
            <person name="Entian K.-D."/>
            <person name="Errington J."/>
            <person name="Fabret C."/>
            <person name="Ferrari E."/>
            <person name="Foulger D."/>
            <person name="Fritz C."/>
            <person name="Fujita M."/>
            <person name="Fujita Y."/>
            <person name="Fuma S."/>
            <person name="Galizzi A."/>
            <person name="Galleron N."/>
            <person name="Ghim S.-Y."/>
            <person name="Glaser P."/>
            <person name="Goffeau A."/>
            <person name="Golightly E.J."/>
            <person name="Grandi G."/>
            <person name="Guiseppi G."/>
            <person name="Guy B.J."/>
            <person name="Haga K."/>
            <person name="Haiech J."/>
            <person name="Harwood C.R."/>
            <person name="Henaut A."/>
            <person name="Hilbert H."/>
            <person name="Holsappel S."/>
            <person name="Hosono S."/>
            <person name="Hullo M.-F."/>
            <person name="Itaya M."/>
            <person name="Jones L.-M."/>
            <person name="Joris B."/>
            <person name="Karamata D."/>
            <person name="Kasahara Y."/>
            <person name="Klaerr-Blanchard M."/>
            <person name="Klein C."/>
            <person name="Kobayashi Y."/>
            <person name="Koetter P."/>
            <person name="Koningstein G."/>
            <person name="Krogh S."/>
            <person name="Kumano M."/>
            <person name="Kurita K."/>
            <person name="Lapidus A."/>
            <person name="Lardinois S."/>
            <person name="Lauber J."/>
            <person name="Lazarevic V."/>
            <person name="Lee S.-M."/>
            <person name="Levine A."/>
            <person name="Liu H."/>
            <person name="Masuda S."/>
            <person name="Mauel C."/>
            <person name="Medigue C."/>
            <person name="Medina N."/>
            <person name="Mellado R.P."/>
            <person name="Mizuno M."/>
            <person name="Moestl D."/>
            <person name="Nakai S."/>
            <person name="Noback M."/>
            <person name="Noone D."/>
            <person name="O'Reilly M."/>
            <person name="Ogawa K."/>
            <person name="Ogiwara A."/>
            <person name="Oudega B."/>
            <person name="Park S.-H."/>
            <person name="Parro V."/>
            <person name="Pohl T.M."/>
            <person name="Portetelle D."/>
            <person name="Porwollik S."/>
            <person name="Prescott A.M."/>
            <person name="Presecan E."/>
            <person name="Pujic P."/>
            <person name="Purnelle B."/>
            <person name="Rapoport G."/>
            <person name="Rey M."/>
            <person name="Reynolds S."/>
            <person name="Rieger M."/>
            <person name="Rivolta C."/>
            <person name="Rocha E."/>
            <person name="Roche B."/>
            <person name="Rose M."/>
            <person name="Sadaie Y."/>
            <person name="Sato T."/>
            <person name="Scanlan E."/>
            <person name="Schleich S."/>
            <person name="Schroeter R."/>
            <person name="Scoffone F."/>
            <person name="Sekiguchi J."/>
            <person name="Sekowska A."/>
            <person name="Seror S.J."/>
            <person name="Serror P."/>
            <person name="Shin B.-S."/>
            <person name="Soldo B."/>
            <person name="Sorokin A."/>
            <person name="Tacconi E."/>
            <person name="Takagi T."/>
            <person name="Takahashi H."/>
            <person name="Takemaru K."/>
            <person name="Takeuchi M."/>
            <person name="Tamakoshi A."/>
            <person name="Tanaka T."/>
            <person name="Terpstra P."/>
            <person name="Tognoni A."/>
            <person name="Tosato V."/>
            <person name="Uchiyama S."/>
            <person name="Vandenbol M."/>
            <person name="Vannier F."/>
            <person name="Vassarotti A."/>
            <person name="Viari A."/>
            <person name="Wambutt R."/>
            <person name="Wedler E."/>
            <person name="Wedler H."/>
            <person name="Weitzenegger T."/>
            <person name="Winters P."/>
            <person name="Wipat A."/>
            <person name="Yamamoto H."/>
            <person name="Yamane K."/>
            <person name="Yasumoto K."/>
            <person name="Yata K."/>
            <person name="Yoshida K."/>
            <person name="Yoshikawa H.-F."/>
            <person name="Zumstein E."/>
            <person name="Yoshikawa H."/>
            <person name="Danchin A."/>
        </authorList>
    </citation>
    <scope>NUCLEOTIDE SEQUENCE [LARGE SCALE GENOMIC DNA]</scope>
    <source>
        <strain>168</strain>
    </source>
</reference>
<accession>C0H454</accession>
<feature type="chain" id="PRO_0000386672" description="Uncharacterized protein YqzN">
    <location>
        <begin position="1"/>
        <end position="63"/>
    </location>
</feature>
<keyword id="KW-1185">Reference proteome</keyword>
<gene>
    <name type="primary">yqzN</name>
    <name type="ordered locus">BSU26089</name>
</gene>
<sequence length="63" mass="7368">MMATKKEKAENAFYIKDLREHSRELFGVKPEVFDGALFHVHKMSITKSEAKKLISQFLQKEVK</sequence>